<proteinExistence type="evidence at protein level"/>
<sequence length="152" mass="16233">KTNKIVITNDKGRLSKEEIERMLAEAEKYKAEDEAEAARISAKNALESYAYSLRNTLSDSKVDEKLDAGDKQKLTAEIDKTVQWLDDNQTATKDEYESQQKELEGVANPIMMKFYGAGGEGGMPGGMPGGGMPGGAPGGAAGDDGPTVEEVD</sequence>
<evidence type="ECO:0000256" key="1">
    <source>
        <dbReference type="SAM" id="MobiDB-lite"/>
    </source>
</evidence>
<evidence type="ECO:0000305" key="2"/>
<comment type="allergen">
    <text>Causes an allergic reaction in human.</text>
</comment>
<comment type="similarity">
    <text evidence="2">Belongs to the heat shock protein 70 family.</text>
</comment>
<reference key="1">
    <citation type="journal article" date="1998" name="Int. Arch. Allergy Immunol.">
        <title>Molecular cloning of IgE-binding fragments of Alternaria alternata allergens.</title>
        <authorList>
            <person name="De Vouge M.W."/>
            <person name="Thaker A.J."/>
            <person name="Zhang L."/>
            <person name="Muradia G."/>
            <person name="Rode H."/>
            <person name="Vijay H.M."/>
        </authorList>
    </citation>
    <scope>NUCLEOTIDE SEQUENCE [MRNA]</scope>
    <scope>CROSS-REACTIVITY WITH ATOPIC HUMAN SERA</scope>
</reference>
<name>HSP70_ALTAL</name>
<organism>
    <name type="scientific">Alternaria alternata</name>
    <name type="common">Alternaria rot fungus</name>
    <name type="synonym">Torula alternata</name>
    <dbReference type="NCBI Taxonomy" id="5599"/>
    <lineage>
        <taxon>Eukaryota</taxon>
        <taxon>Fungi</taxon>
        <taxon>Dikarya</taxon>
        <taxon>Ascomycota</taxon>
        <taxon>Pezizomycotina</taxon>
        <taxon>Dothideomycetes</taxon>
        <taxon>Pleosporomycetidae</taxon>
        <taxon>Pleosporales</taxon>
        <taxon>Pleosporineae</taxon>
        <taxon>Pleosporaceae</taxon>
        <taxon>Alternaria</taxon>
        <taxon>Alternaria sect. Alternaria</taxon>
        <taxon>Alternaria alternata complex</taxon>
    </lineage>
</organism>
<protein>
    <recommendedName>
        <fullName>Heat shock 70 kDa protein</fullName>
    </recommendedName>
    <allergenName>Alt a 3</allergenName>
</protein>
<keyword id="KW-0020">Allergen</keyword>
<keyword id="KW-0067">ATP-binding</keyword>
<keyword id="KW-0143">Chaperone</keyword>
<keyword id="KW-0547">Nucleotide-binding</keyword>
<keyword id="KW-0346">Stress response</keyword>
<feature type="chain" id="PRO_0000078360" description="Heat shock 70 kDa protein">
    <location>
        <begin position="1" status="less than"/>
        <end position="152"/>
    </location>
</feature>
<feature type="region of interest" description="Disordered" evidence="1">
    <location>
        <begin position="121"/>
        <end position="152"/>
    </location>
</feature>
<feature type="compositionally biased region" description="Gly residues" evidence="1">
    <location>
        <begin position="121"/>
        <end position="142"/>
    </location>
</feature>
<feature type="non-terminal residue">
    <location>
        <position position="1"/>
    </location>
</feature>
<dbReference type="EMBL" id="U87807">
    <property type="protein sequence ID" value="AAB48042.1"/>
    <property type="molecule type" value="mRNA"/>
</dbReference>
<dbReference type="EMBL" id="U87808">
    <property type="protein sequence ID" value="AAB48043.1"/>
    <property type="molecule type" value="mRNA"/>
</dbReference>
<dbReference type="SMR" id="P78983"/>
<dbReference type="Allergome" id="17">
    <property type="allergen name" value="Alt a 3"/>
</dbReference>
<dbReference type="Allergome" id="3059">
    <property type="allergen name" value="Alt a 3.0101"/>
</dbReference>
<dbReference type="VEuPathDB" id="FungiDB:CC77DRAFT_74722"/>
<dbReference type="GO" id="GO:0034663">
    <property type="term" value="C:endoplasmic reticulum chaperone complex"/>
    <property type="evidence" value="ECO:0007669"/>
    <property type="project" value="TreeGrafter"/>
</dbReference>
<dbReference type="GO" id="GO:0005524">
    <property type="term" value="F:ATP binding"/>
    <property type="evidence" value="ECO:0007669"/>
    <property type="project" value="UniProtKB-KW"/>
</dbReference>
<dbReference type="GO" id="GO:0140662">
    <property type="term" value="F:ATP-dependent protein folding chaperone"/>
    <property type="evidence" value="ECO:0007669"/>
    <property type="project" value="InterPro"/>
</dbReference>
<dbReference type="GO" id="GO:0030968">
    <property type="term" value="P:endoplasmic reticulum unfolded protein response"/>
    <property type="evidence" value="ECO:0007669"/>
    <property type="project" value="TreeGrafter"/>
</dbReference>
<dbReference type="FunFam" id="1.20.1270.10:FF:000021">
    <property type="entry name" value="Heat shock protein 70"/>
    <property type="match status" value="1"/>
</dbReference>
<dbReference type="Gene3D" id="1.20.1270.10">
    <property type="match status" value="1"/>
</dbReference>
<dbReference type="Gene3D" id="2.60.34.10">
    <property type="entry name" value="Substrate Binding Domain Of DNAk, Chain A, domain 1"/>
    <property type="match status" value="1"/>
</dbReference>
<dbReference type="InterPro" id="IPR029048">
    <property type="entry name" value="HSP70_C_sf"/>
</dbReference>
<dbReference type="InterPro" id="IPR029047">
    <property type="entry name" value="HSP70_peptide-bd_sf"/>
</dbReference>
<dbReference type="InterPro" id="IPR013126">
    <property type="entry name" value="Hsp_70_fam"/>
</dbReference>
<dbReference type="PANTHER" id="PTHR45639:SF34">
    <property type="entry name" value="CHAPERONE PROTEIN DNAK"/>
    <property type="match status" value="1"/>
</dbReference>
<dbReference type="PANTHER" id="PTHR45639">
    <property type="entry name" value="HSC70CB, ISOFORM G-RELATED"/>
    <property type="match status" value="1"/>
</dbReference>
<dbReference type="Pfam" id="PF00012">
    <property type="entry name" value="HSP70"/>
    <property type="match status" value="1"/>
</dbReference>
<dbReference type="SUPFAM" id="SSF100934">
    <property type="entry name" value="Heat shock protein 70kD (HSP70), C-terminal subdomain"/>
    <property type="match status" value="1"/>
</dbReference>
<dbReference type="SUPFAM" id="SSF100920">
    <property type="entry name" value="Heat shock protein 70kD (HSP70), peptide-binding domain"/>
    <property type="match status" value="1"/>
</dbReference>
<gene>
    <name type="primary">HSP70</name>
    <name type="synonym">ALTA3</name>
</gene>
<accession>P78983</accession>
<accession>P78984</accession>